<protein>
    <recommendedName>
        <fullName>Tetrahydromethanopterin S-methyltransferase subunit F</fullName>
        <ecNumber>7.2.1.4</ecNumber>
    </recommendedName>
    <alternativeName>
        <fullName>N5-methyltetrahydromethanopterin--coenzyme M methyltransferase subunit F</fullName>
    </alternativeName>
</protein>
<feature type="initiator methionine" description="Removed" evidence="3">
    <location>
        <position position="1"/>
    </location>
</feature>
<feature type="chain" id="PRO_0000147550" description="Tetrahydromethanopterin S-methyltransferase subunit F">
    <location>
        <begin position="2"/>
        <end position="72"/>
    </location>
</feature>
<feature type="transmembrane region" description="Helical" evidence="2">
    <location>
        <begin position="49"/>
        <end position="69"/>
    </location>
</feature>
<feature type="sequence conflict" description="In Ref. 1; AAC38335." evidence="4" ref="1">
    <original>S</original>
    <variation>F</variation>
    <location>
        <position position="42"/>
    </location>
</feature>
<feature type="sequence conflict" description="In Ref. 1; AAC38335." evidence="4" ref="1">
    <original>TGI</original>
    <variation>PD</variation>
    <location>
        <begin position="47"/>
        <end position="49"/>
    </location>
</feature>
<feature type="sequence conflict" description="In Ref. 1; AAC38335." evidence="4" ref="1">
    <original>F</original>
    <variation>L</variation>
    <location>
        <position position="56"/>
    </location>
</feature>
<dbReference type="EC" id="7.2.1.4"/>
<dbReference type="EMBL" id="AF042381">
    <property type="protein sequence ID" value="AAC38335.1"/>
    <property type="molecule type" value="Genomic_DNA"/>
</dbReference>
<dbReference type="EMBL" id="AE008384">
    <property type="protein sequence ID" value="AAM31238.1"/>
    <property type="status" value="ALT_INIT"/>
    <property type="molecule type" value="Genomic_DNA"/>
</dbReference>
<dbReference type="SMR" id="P80654"/>
<dbReference type="KEGG" id="mma:MM_1542"/>
<dbReference type="PATRIC" id="fig|192952.21.peg.1783"/>
<dbReference type="eggNOG" id="arCOG03381">
    <property type="taxonomic scope" value="Archaea"/>
</dbReference>
<dbReference type="HOGENOM" id="CLU_188097_0_0_2"/>
<dbReference type="BRENDA" id="2.1.1.86">
    <property type="organism ID" value="3270"/>
</dbReference>
<dbReference type="UniPathway" id="UPA00640">
    <property type="reaction ID" value="UER00698"/>
</dbReference>
<dbReference type="Proteomes" id="UP000000595">
    <property type="component" value="Chromosome"/>
</dbReference>
<dbReference type="GO" id="GO:0005886">
    <property type="term" value="C:plasma membrane"/>
    <property type="evidence" value="ECO:0007669"/>
    <property type="project" value="UniProtKB-SubCell"/>
</dbReference>
<dbReference type="GO" id="GO:0030269">
    <property type="term" value="F:tetrahydromethanopterin S-methyltransferase activity"/>
    <property type="evidence" value="ECO:0007669"/>
    <property type="project" value="UniProtKB-UniRule"/>
</dbReference>
<dbReference type="GO" id="GO:0019386">
    <property type="term" value="P:methanogenesis, from carbon dioxide"/>
    <property type="evidence" value="ECO:0007669"/>
    <property type="project" value="UniProtKB-UniRule"/>
</dbReference>
<dbReference type="GO" id="GO:0032259">
    <property type="term" value="P:methylation"/>
    <property type="evidence" value="ECO:0007669"/>
    <property type="project" value="UniProtKB-KW"/>
</dbReference>
<dbReference type="GO" id="GO:0006730">
    <property type="term" value="P:one-carbon metabolic process"/>
    <property type="evidence" value="ECO:0007669"/>
    <property type="project" value="UniProtKB-UniRule"/>
</dbReference>
<dbReference type="HAMAP" id="MF_01099">
    <property type="entry name" value="MtrF"/>
    <property type="match status" value="1"/>
</dbReference>
<dbReference type="InterPro" id="IPR011307">
    <property type="entry name" value="MeTrfase_F"/>
</dbReference>
<dbReference type="InterPro" id="IPR013347">
    <property type="entry name" value="MeTrfase_F_su"/>
</dbReference>
<dbReference type="NCBIfam" id="TIGR02507">
    <property type="entry name" value="MtrF"/>
    <property type="match status" value="1"/>
</dbReference>
<dbReference type="NCBIfam" id="NF009776">
    <property type="entry name" value="PRK13275.1"/>
    <property type="match status" value="1"/>
</dbReference>
<dbReference type="Pfam" id="PF09472">
    <property type="entry name" value="MtrF"/>
    <property type="match status" value="1"/>
</dbReference>
<dbReference type="PIRSF" id="PIRSF006523">
    <property type="entry name" value="MtrF"/>
    <property type="match status" value="1"/>
</dbReference>
<organism>
    <name type="scientific">Methanosarcina mazei (strain ATCC BAA-159 / DSM 3647 / Goe1 / Go1 / JCM 11833 / OCM 88)</name>
    <name type="common">Methanosarcina frisia</name>
    <dbReference type="NCBI Taxonomy" id="192952"/>
    <lineage>
        <taxon>Archaea</taxon>
        <taxon>Methanobacteriati</taxon>
        <taxon>Methanobacteriota</taxon>
        <taxon>Stenosarchaea group</taxon>
        <taxon>Methanomicrobia</taxon>
        <taxon>Methanosarcinales</taxon>
        <taxon>Methanosarcinaceae</taxon>
        <taxon>Methanosarcina</taxon>
    </lineage>
</organism>
<accession>P80654</accession>
<accession>O59641</accession>
<gene>
    <name type="primary">mtrF</name>
    <name type="ordered locus">MM_1542</name>
</gene>
<proteinExistence type="evidence at protein level"/>
<evidence type="ECO:0000250" key="1"/>
<evidence type="ECO:0000255" key="2"/>
<evidence type="ECO:0000269" key="3">
    <source>
    </source>
</evidence>
<evidence type="ECO:0000305" key="4"/>
<reference key="1">
    <citation type="journal article" date="1998" name="FEBS Lett.">
        <title>Cloning, sequencing and expression of the genes encoding the sodium translocating N5-methyltetrahydromethanopterin:coenzyme M methyltransferase of the methylotrophic archaeon Methanosarcina mazei Go1.</title>
        <authorList>
            <person name="Lienard T."/>
            <person name="Gottschalk G."/>
        </authorList>
    </citation>
    <scope>NUCLEOTIDE SEQUENCE [GENOMIC DNA]</scope>
    <source>
        <strain>ATCC BAA-159 / DSM 3647 / Goe1 / Go1 / JCM 11833 / OCM 88</strain>
    </source>
</reference>
<reference key="2">
    <citation type="journal article" date="2002" name="J. Mol. Microbiol. Biotechnol.">
        <title>The genome of Methanosarcina mazei: evidence for lateral gene transfer between Bacteria and Archaea.</title>
        <authorList>
            <person name="Deppenmeier U."/>
            <person name="Johann A."/>
            <person name="Hartsch T."/>
            <person name="Merkl R."/>
            <person name="Schmitz R.A."/>
            <person name="Martinez-Arias R."/>
            <person name="Henne A."/>
            <person name="Wiezer A."/>
            <person name="Baeumer S."/>
            <person name="Jacobi C."/>
            <person name="Brueggemann H."/>
            <person name="Lienard T."/>
            <person name="Christmann A."/>
            <person name="Boemecke M."/>
            <person name="Steckel S."/>
            <person name="Bhattacharyya A."/>
            <person name="Lykidis A."/>
            <person name="Overbeek R."/>
            <person name="Klenk H.-P."/>
            <person name="Gunsalus R.P."/>
            <person name="Fritz H.-J."/>
            <person name="Gottschalk G."/>
        </authorList>
    </citation>
    <scope>NUCLEOTIDE SEQUENCE [LARGE SCALE GENOMIC DNA]</scope>
    <source>
        <strain>ATCC BAA-159 / DSM 3647 / Goe1 / Go1 / JCM 11833 / OCM 88</strain>
    </source>
</reference>
<reference key="3">
    <citation type="journal article" date="1996" name="Eur. J. Biochem.">
        <title>Sodium ion translocation by N5-methyltetrahydromethanopterin: coenzyme M methyltransferase from Methanosarcina mazei Go1 reconstituted in ether lipid liposomes.</title>
        <authorList>
            <person name="Lienard T."/>
            <person name="Becher B."/>
            <person name="Marschall M."/>
            <person name="Bowien S."/>
            <person name="Gottschalk G."/>
        </authorList>
    </citation>
    <scope>PROTEIN SEQUENCE OF 2-16</scope>
    <source>
        <strain>ATCC BAA-159 / DSM 3647 / Goe1 / Go1 / JCM 11833 / OCM 88</strain>
    </source>
</reference>
<comment type="function">
    <text>Part of a complex that catalyzes the formation of methyl-coenzyme M and tetrahydromethanopterin from coenzyme M and methyl-tetrahydromethanopterin. This is an energy-conserving, sodium-ion translocating step.</text>
</comment>
<comment type="catalytic activity">
    <reaction>
        <text>5-methyl-5,6,7,8-tetrahydromethanopterin + coenzyme M + 2 Na(+)(in) = 5,6,7,8-tetrahydromethanopterin + methyl-coenzyme M + 2 Na(+)(out)</text>
        <dbReference type="Rhea" id="RHEA:53492"/>
        <dbReference type="ChEBI" id="CHEBI:29101"/>
        <dbReference type="ChEBI" id="CHEBI:58103"/>
        <dbReference type="ChEBI" id="CHEBI:58116"/>
        <dbReference type="ChEBI" id="CHEBI:58286"/>
        <dbReference type="ChEBI" id="CHEBI:58319"/>
        <dbReference type="EC" id="7.2.1.4"/>
    </reaction>
</comment>
<comment type="pathway">
    <text>One-carbon metabolism; methanogenesis from CO(2); methyl-coenzyme M from 5,10-methylene-5,6,7,8-tetrahydromethanopterin: step 2/2.</text>
</comment>
<comment type="subunit">
    <text evidence="1">The complex is composed of 8 subunits; MtrA, MtrB, MtrC, MtrD, MtrE, MtrF, MtrG and MtrH.</text>
</comment>
<comment type="subcellular location">
    <subcellularLocation>
        <location evidence="4">Cell membrane</location>
        <topology evidence="4">Single-pass membrane protein</topology>
    </subcellularLocation>
</comment>
<comment type="similarity">
    <text evidence="4">Belongs to the MtrF family.</text>
</comment>
<comment type="sequence caution" evidence="4">
    <conflict type="erroneous initiation">
        <sequence resource="EMBL-CDS" id="AAM31238"/>
    </conflict>
</comment>
<name>MTRF_METMA</name>
<sequence length="72" mass="7568">MAEEHEKGVPMVLAPQMGAIDATVESIRYRAQLIARNQKLDSGVAATGIIGFAAGFLFSLLMVIVLPVAVGL</sequence>
<keyword id="KW-1003">Cell membrane</keyword>
<keyword id="KW-0903">Direct protein sequencing</keyword>
<keyword id="KW-0472">Membrane</keyword>
<keyword id="KW-0484">Methanogenesis</keyword>
<keyword id="KW-0489">Methyltransferase</keyword>
<keyword id="KW-0554">One-carbon metabolism</keyword>
<keyword id="KW-0808">Transferase</keyword>
<keyword id="KW-1278">Translocase</keyword>
<keyword id="KW-0812">Transmembrane</keyword>
<keyword id="KW-1133">Transmembrane helix</keyword>